<organism>
    <name type="scientific">Acanthamoeba polyphaga mimivirus</name>
    <name type="common">APMV</name>
    <dbReference type="NCBI Taxonomy" id="212035"/>
    <lineage>
        <taxon>Viruses</taxon>
        <taxon>Varidnaviria</taxon>
        <taxon>Bamfordvirae</taxon>
        <taxon>Nucleocytoviricota</taxon>
        <taxon>Megaviricetes</taxon>
        <taxon>Imitervirales</taxon>
        <taxon>Mimiviridae</taxon>
        <taxon>Megamimivirinae</taxon>
        <taxon>Mimivirus</taxon>
        <taxon>Mimivirus bradfordmassiliense</taxon>
    </lineage>
</organism>
<accession>Q5UP97</accession>
<dbReference type="EMBL" id="AY653733">
    <property type="protein sequence ID" value="AAV50296.1"/>
    <property type="molecule type" value="Genomic_DNA"/>
</dbReference>
<dbReference type="SMR" id="Q5UP97"/>
<dbReference type="KEGG" id="vg:9924599"/>
<dbReference type="OrthoDB" id="29581at10239"/>
<dbReference type="Proteomes" id="UP000001134">
    <property type="component" value="Genome"/>
</dbReference>
<dbReference type="Gene3D" id="1.25.40.10">
    <property type="entry name" value="Tetratricopeptide repeat domain"/>
    <property type="match status" value="2"/>
</dbReference>
<dbReference type="InterPro" id="IPR006597">
    <property type="entry name" value="Sel1-like"/>
</dbReference>
<dbReference type="InterPro" id="IPR050767">
    <property type="entry name" value="Sel1_AlgK"/>
</dbReference>
<dbReference type="InterPro" id="IPR011990">
    <property type="entry name" value="TPR-like_helical_dom_sf"/>
</dbReference>
<dbReference type="PANTHER" id="PTHR11102:SF160">
    <property type="entry name" value="ERAD-ASSOCIATED E3 UBIQUITIN-PROTEIN LIGASE COMPONENT HRD3"/>
    <property type="match status" value="1"/>
</dbReference>
<dbReference type="PANTHER" id="PTHR11102">
    <property type="entry name" value="SEL-1-LIKE PROTEIN"/>
    <property type="match status" value="1"/>
</dbReference>
<dbReference type="Pfam" id="PF08238">
    <property type="entry name" value="Sel1"/>
    <property type="match status" value="5"/>
</dbReference>
<dbReference type="SMART" id="SM00671">
    <property type="entry name" value="SEL1"/>
    <property type="match status" value="5"/>
</dbReference>
<dbReference type="SUPFAM" id="SSF81901">
    <property type="entry name" value="HCP-like"/>
    <property type="match status" value="2"/>
</dbReference>
<sequence length="533" mass="63345">MDYKHVDIQKLIELAKYDNYAQEEIVERMIVGQVKHDLWKNINPFDWENLFEKCYSNPKYVFVLLCAYKSIFLCKIDPKIPTSNTIIYLEKIHPIVKQQAKNCDVLSQNNLGFMYEEGIGTEIKINKAKMWYTLSANQGLSFAQYNLGYYYYNKAKYEKSINYFQKSAQSGYYLSNFMLAETYLKLSIPNFNEAIKNYLLAANQGCNISQYRLGMIYFEGKYVNTDMNQAYKWFKLSAKQGNYFSQYGLGRVYYSMDSTKYNCQKAINCFIKSANCGHIYAQKKLIEYYEINNNIAEMIYWCVKSSDVDKIKKYIKINENIENTSDIVYFDLVRKNLEDVGSDILYKCQLLIIQNKYFWKDNVSLCRVKLCEKLENIILKFIDWTNKLQNNSLLLLSCLSFIDDNHNVSIRHHQHTTGLIPYVKQHEFRNKKFITFDKENVSFVNEIIDITNGTDMNEWFESLQFLKLNYQNLMKTSMNSSRIYKDLILIQNLETDIEKYCELMFDEIEYGVYDRNRLFIENREYNMAKLFDN</sequence>
<keyword id="KW-1185">Reference proteome</keyword>
<keyword id="KW-0677">Repeat</keyword>
<organismHost>
    <name type="scientific">Acanthamoeba polyphaga</name>
    <name type="common">Amoeba</name>
    <dbReference type="NCBI Taxonomy" id="5757"/>
</organismHost>
<reference key="1">
    <citation type="journal article" date="2004" name="Science">
        <title>The 1.2-megabase genome sequence of Mimivirus.</title>
        <authorList>
            <person name="Raoult D."/>
            <person name="Audic S."/>
            <person name="Robert C."/>
            <person name="Abergel C."/>
            <person name="Renesto P."/>
            <person name="Ogata H."/>
            <person name="La Scola B."/>
            <person name="Susan M."/>
            <person name="Claverie J.-M."/>
        </authorList>
    </citation>
    <scope>NUCLEOTIDE SEQUENCE [LARGE SCALE GENOMIC DNA]</scope>
    <source>
        <strain>Rowbotham-Bradford</strain>
    </source>
</reference>
<gene>
    <name type="ordered locus">MIMI_L21</name>
</gene>
<protein>
    <recommendedName>
        <fullName>Putative sel1-like repeat-containing protein L21</fullName>
    </recommendedName>
</protein>
<proteinExistence type="predicted"/>
<feature type="chain" id="PRO_0000071183" description="Putative sel1-like repeat-containing protein L21">
    <location>
        <begin position="1"/>
        <end position="533"/>
    </location>
</feature>
<feature type="repeat" description="Sel1-like 1">
    <location>
        <begin position="105"/>
        <end position="140"/>
    </location>
</feature>
<feature type="repeat" description="Sel1-like 2">
    <location>
        <begin position="141"/>
        <end position="172"/>
    </location>
</feature>
<feature type="repeat" description="Sel1-like 3">
    <location>
        <begin position="173"/>
        <end position="206"/>
    </location>
</feature>
<feature type="repeat" description="Sel1-like 4">
    <location>
        <begin position="207"/>
        <end position="242"/>
    </location>
</feature>
<feature type="repeat" description="Sel1-like 5">
    <location>
        <begin position="243"/>
        <end position="278"/>
    </location>
</feature>
<name>YL021_MIMIV</name>